<protein>
    <recommendedName>
        <fullName evidence="1">Major capsid protein L1</fullName>
    </recommendedName>
</protein>
<name>VL1_HPV62</name>
<sequence length="503" mass="56551">MAMWRPGDGKVYLPPTPVSKVLSTDTYVTRTNLFYYGGSSRLLTVGHPYCTLQVGQGKRATIPKVSGYQYRVFRVKLPDPNKFTLPDATLYNPDTERMVWACRGIEVGRGQPLGVGTSGHPLYNRLDDTENTSLLAAANDDSRDNISVDYKQTQLLIVGCKPPIGEHWTKGTLCPNAAPAPTECPPLEFKNTTIQDGDMVETGYGAIDFKSLQESKSEVPLDICTSTCKYPDYLQMAAEPYGDCMFFCLRREQMFARHFFNRHGTMGEALPTDLYMKGTPGSDRQMPGSYIYAPTPSGSMVSSDSQLFNKPYWLQRAQGHNNGICWFNELFVTVVDTTRSTNFTICTASTAAAEYKATNFREFLRHTEEFDLQFIFQLCKIQLTPEIMAYLHNMNKDLLDDWNFGVLPPPSTSLDETYHYLQSRAITCQKGAASPSPKVDPYAQMTFWTVDLKDKLSTDLDQFPLGRKFLLQAGSRPRSVAVSRKRSAPTKQSPTSAKRKRRK</sequence>
<dbReference type="EMBL" id="AY395706">
    <property type="protein sequence ID" value="AAR32252.1"/>
    <property type="molecule type" value="Genomic_DNA"/>
</dbReference>
<dbReference type="EMBL" id="U12499">
    <property type="protein sequence ID" value="AAA67243.1"/>
    <property type="molecule type" value="Genomic_DNA"/>
</dbReference>
<dbReference type="SMR" id="P50823"/>
<dbReference type="Proteomes" id="UP000102297">
    <property type="component" value="Genome"/>
</dbReference>
<dbReference type="GO" id="GO:0042025">
    <property type="term" value="C:host cell nucleus"/>
    <property type="evidence" value="ECO:0007669"/>
    <property type="project" value="UniProtKB-SubCell"/>
</dbReference>
<dbReference type="GO" id="GO:0039620">
    <property type="term" value="C:T=7 icosahedral viral capsid"/>
    <property type="evidence" value="ECO:0007669"/>
    <property type="project" value="UniProtKB-UniRule"/>
</dbReference>
<dbReference type="GO" id="GO:0005198">
    <property type="term" value="F:structural molecule activity"/>
    <property type="evidence" value="ECO:0007669"/>
    <property type="project" value="UniProtKB-UniRule"/>
</dbReference>
<dbReference type="GO" id="GO:0075509">
    <property type="term" value="P:endocytosis involved in viral entry into host cell"/>
    <property type="evidence" value="ECO:0007669"/>
    <property type="project" value="UniProtKB-KW"/>
</dbReference>
<dbReference type="GO" id="GO:0019062">
    <property type="term" value="P:virion attachment to host cell"/>
    <property type="evidence" value="ECO:0007669"/>
    <property type="project" value="UniProtKB-UniRule"/>
</dbReference>
<dbReference type="Gene3D" id="2.60.175.20">
    <property type="entry name" value="Major capsid L1 (late) superfamily, Papillomavirus"/>
    <property type="match status" value="2"/>
</dbReference>
<dbReference type="HAMAP" id="MF_04002">
    <property type="entry name" value="PPV_L1"/>
    <property type="match status" value="1"/>
</dbReference>
<dbReference type="InterPro" id="IPR002210">
    <property type="entry name" value="Capsid_L1_Papillomavir"/>
</dbReference>
<dbReference type="InterPro" id="IPR036973">
    <property type="entry name" value="Capsid_L1_sf_Papillomavir"/>
</dbReference>
<dbReference type="InterPro" id="IPR011222">
    <property type="entry name" value="dsDNA_vir_gr_I_capsid"/>
</dbReference>
<dbReference type="Pfam" id="PF00500">
    <property type="entry name" value="Late_protein_L1"/>
    <property type="match status" value="1"/>
</dbReference>
<dbReference type="PRINTS" id="PR00865">
    <property type="entry name" value="HPVCAPSIDL1"/>
</dbReference>
<dbReference type="SUPFAM" id="SSF88648">
    <property type="entry name" value="Group I dsDNA viruses"/>
    <property type="match status" value="1"/>
</dbReference>
<organismHost>
    <name type="scientific">Homo sapiens</name>
    <name type="common">Human</name>
    <dbReference type="NCBI Taxonomy" id="9606"/>
</organismHost>
<keyword id="KW-0167">Capsid protein</keyword>
<keyword id="KW-1015">Disulfide bond</keyword>
<keyword id="KW-1048">Host nucleus</keyword>
<keyword id="KW-0945">Host-virus interaction</keyword>
<keyword id="KW-0426">Late protein</keyword>
<keyword id="KW-1185">Reference proteome</keyword>
<keyword id="KW-1145">T=7 icosahedral capsid protein</keyword>
<keyword id="KW-1161">Viral attachment to host cell</keyword>
<keyword id="KW-1162">Viral penetration into host cytoplasm</keyword>
<keyword id="KW-0946">Virion</keyword>
<keyword id="KW-1164">Virus endocytosis by host</keyword>
<keyword id="KW-1160">Virus entry into host cell</keyword>
<comment type="function">
    <text evidence="1">Forms an icosahedral capsid with a T=7 symmetry and a 50 nm diameter. The capsid is composed of 72 pentamers linked to each other by disulfide bonds and associated with L2 proteins. Binds to heparan sulfate proteoglycans on cell surface of basal layer keratinocytes to provide initial virion attachment. This binding mediates a conformational change in the virus capsid that facilitates efficient infection. The virion enters the host cell via endocytosis. During virus trafficking, L1 protein dissociates from the viral DNA and the genomic DNA is released to the host nucleus. The virion assembly takes place within the cell nucleus. Encapsulates the genomic DNA together with protein L2.</text>
</comment>
<comment type="subunit">
    <text evidence="1">Self-assembles into homopentamers. The capsid has an icosahedral symmetry and consists of 72 capsomers, with each capsomer being a pentamer of L1. Interacts with the minor capsid protein L2; this interaction is necessary for viral genome encapsidation. Interacts with protein E2; this interaction enhances E2-dependent replication and transcription activation.</text>
</comment>
<comment type="subcellular location">
    <subcellularLocation>
        <location evidence="1">Virion</location>
    </subcellularLocation>
    <subcellularLocation>
        <location evidence="1">Host nucleus</location>
    </subcellularLocation>
</comment>
<comment type="similarity">
    <text evidence="1">Belongs to the papillomaviridae L1 protein family.</text>
</comment>
<reference key="1">
    <citation type="journal article" date="2004" name="J. Infect. Dis.">
        <title>Codetection of a mixed population of candHPV62 containing wild-type and disrupted E1 open-reading frame in a 45-year-old woman with normal cytology.</title>
        <authorList>
            <person name="Fu L."/>
            <person name="Terai M."/>
            <person name="Matsukura T."/>
            <person name="Herrero R."/>
            <person name="Burk R.D."/>
        </authorList>
    </citation>
    <scope>NUCLEOTIDE SEQUENCE [GENOMIC DNA]</scope>
</reference>
<reference key="2">
    <citation type="journal article" date="1994" name="J. Infect. Dis.">
        <title>Identification and assessment of known and novel human papillomaviruses by polymerase chain reaction amplification, restriction fragment length polymorphisms, nucleotide sequence, and phylogenetic algorithms.</title>
        <authorList>
            <person name="Bernard H.U."/>
            <person name="Chan S.-Y."/>
            <person name="Manos M.M."/>
            <person name="Ong C.K."/>
            <person name="Villa L.L."/>
            <person name="Delius H."/>
            <person name="Peyton C.L."/>
            <person name="Bauer H.M."/>
            <person name="Wheeler C.M."/>
        </authorList>
    </citation>
    <scope>NUCLEOTIDE SEQUENCE [GENOMIC DNA] OF 317-466</scope>
</reference>
<accession>P50823</accession>
<accession>Q676U6</accession>
<proteinExistence type="inferred from homology"/>
<feature type="chain" id="PRO_0000133544" description="Major capsid protein L1">
    <location>
        <begin position="1"/>
        <end position="503"/>
    </location>
</feature>
<feature type="region of interest" description="Disordered" evidence="2">
    <location>
        <begin position="475"/>
        <end position="503"/>
    </location>
</feature>
<feature type="disulfide bond" description="Interchain (with C-428)" evidence="1">
    <location>
        <position position="174"/>
    </location>
</feature>
<feature type="disulfide bond" description="Interchain (with C-174)" evidence="1">
    <location>
        <position position="428"/>
    </location>
</feature>
<feature type="sequence conflict" description="In Ref. 2; AAA67243." evidence="3" ref="2">
    <original>K</original>
    <variation>T</variation>
    <location>
        <position position="356"/>
    </location>
</feature>
<feature type="sequence conflict" description="In Ref. 2; AAA67243." evidence="3" ref="2">
    <original>LQ</original>
    <variation>FE</variation>
    <location>
        <begin position="421"/>
        <end position="422"/>
    </location>
</feature>
<feature type="sequence conflict" description="In Ref. 2; AAA67243." evidence="3" ref="2">
    <original>KGAASPS</original>
    <variation>RGLPTR</variation>
    <location>
        <begin position="430"/>
        <end position="436"/>
    </location>
</feature>
<organism>
    <name type="scientific">Human papillomavirus 62</name>
    <dbReference type="NCBI Taxonomy" id="334210"/>
    <lineage>
        <taxon>Viruses</taxon>
        <taxon>Monodnaviria</taxon>
        <taxon>Shotokuvirae</taxon>
        <taxon>Cossaviricota</taxon>
        <taxon>Papovaviricetes</taxon>
        <taxon>Zurhausenvirales</taxon>
        <taxon>Papillomaviridae</taxon>
        <taxon>Firstpapillomavirinae</taxon>
        <taxon>Alphapapillomavirus</taxon>
        <taxon>Alphapapillomavirus 3</taxon>
    </lineage>
</organism>
<gene>
    <name evidence="1" type="primary">L1</name>
</gene>
<evidence type="ECO:0000255" key="1">
    <source>
        <dbReference type="HAMAP-Rule" id="MF_04002"/>
    </source>
</evidence>
<evidence type="ECO:0000256" key="2">
    <source>
        <dbReference type="SAM" id="MobiDB-lite"/>
    </source>
</evidence>
<evidence type="ECO:0000305" key="3"/>